<gene>
    <name evidence="1" type="primary">rplE</name>
    <name type="ordered locus">CKO_04722</name>
</gene>
<protein>
    <recommendedName>
        <fullName evidence="1">Large ribosomal subunit protein uL5</fullName>
    </recommendedName>
    <alternativeName>
        <fullName evidence="2">50S ribosomal protein L5</fullName>
    </alternativeName>
</protein>
<reference key="1">
    <citation type="submission" date="2007-08" db="EMBL/GenBank/DDBJ databases">
        <authorList>
            <consortium name="The Citrobacter koseri Genome Sequencing Project"/>
            <person name="McClelland M."/>
            <person name="Sanderson E.K."/>
            <person name="Porwollik S."/>
            <person name="Spieth J."/>
            <person name="Clifton W.S."/>
            <person name="Latreille P."/>
            <person name="Courtney L."/>
            <person name="Wang C."/>
            <person name="Pepin K."/>
            <person name="Bhonagiri V."/>
            <person name="Nash W."/>
            <person name="Johnson M."/>
            <person name="Thiruvilangam P."/>
            <person name="Wilson R."/>
        </authorList>
    </citation>
    <scope>NUCLEOTIDE SEQUENCE [LARGE SCALE GENOMIC DNA]</scope>
    <source>
        <strain>ATCC BAA-895 / CDC 4225-83 / SGSC4696</strain>
    </source>
</reference>
<organism>
    <name type="scientific">Citrobacter koseri (strain ATCC BAA-895 / CDC 4225-83 / SGSC4696)</name>
    <dbReference type="NCBI Taxonomy" id="290338"/>
    <lineage>
        <taxon>Bacteria</taxon>
        <taxon>Pseudomonadati</taxon>
        <taxon>Pseudomonadota</taxon>
        <taxon>Gammaproteobacteria</taxon>
        <taxon>Enterobacterales</taxon>
        <taxon>Enterobacteriaceae</taxon>
        <taxon>Citrobacter</taxon>
    </lineage>
</organism>
<sequence length="179" mass="20288">MAKLHDYYKDEVVNKLMTEFNYNSVMQVPRVEKITLNMGVGEAIADKKLLDNAAADLAAISGQKPLITKARKSVAGFKIRQGYPIGCKVTLRGERMWEFFERLITIAVPRIRDFRGLSAKSFDGRGNYSMGVREQIIFPEIDYDKVDRVRGLDITITTTAKSDEEGRALLAAFDFPFRK</sequence>
<comment type="function">
    <text evidence="1">This is one of the proteins that bind and probably mediate the attachment of the 5S RNA into the large ribosomal subunit, where it forms part of the central protuberance. In the 70S ribosome it contacts protein S13 of the 30S subunit (bridge B1b), connecting the 2 subunits; this bridge is implicated in subunit movement. Contacts the P site tRNA; the 5S rRNA and some of its associated proteins might help stabilize positioning of ribosome-bound tRNAs.</text>
</comment>
<comment type="subunit">
    <text evidence="1">Part of the 50S ribosomal subunit; part of the 5S rRNA/L5/L18/L25 subcomplex. Contacts the 5S rRNA and the P site tRNA. Forms a bridge to the 30S subunit in the 70S ribosome.</text>
</comment>
<comment type="similarity">
    <text evidence="1">Belongs to the universal ribosomal protein uL5 family.</text>
</comment>
<evidence type="ECO:0000255" key="1">
    <source>
        <dbReference type="HAMAP-Rule" id="MF_01333"/>
    </source>
</evidence>
<evidence type="ECO:0000305" key="2"/>
<dbReference type="EMBL" id="CP000822">
    <property type="protein sequence ID" value="ABV15767.1"/>
    <property type="molecule type" value="Genomic_DNA"/>
</dbReference>
<dbReference type="RefSeq" id="WP_007702494.1">
    <property type="nucleotide sequence ID" value="NC_009792.1"/>
</dbReference>
<dbReference type="SMR" id="A8AQK4"/>
<dbReference type="STRING" id="290338.CKO_04722"/>
<dbReference type="GeneID" id="92804602"/>
<dbReference type="KEGG" id="cko:CKO_04722"/>
<dbReference type="HOGENOM" id="CLU_061015_2_1_6"/>
<dbReference type="OrthoDB" id="9806626at2"/>
<dbReference type="Proteomes" id="UP000008148">
    <property type="component" value="Chromosome"/>
</dbReference>
<dbReference type="GO" id="GO:1990904">
    <property type="term" value="C:ribonucleoprotein complex"/>
    <property type="evidence" value="ECO:0007669"/>
    <property type="project" value="UniProtKB-KW"/>
</dbReference>
<dbReference type="GO" id="GO:0005840">
    <property type="term" value="C:ribosome"/>
    <property type="evidence" value="ECO:0007669"/>
    <property type="project" value="UniProtKB-KW"/>
</dbReference>
<dbReference type="GO" id="GO:0019843">
    <property type="term" value="F:rRNA binding"/>
    <property type="evidence" value="ECO:0007669"/>
    <property type="project" value="UniProtKB-UniRule"/>
</dbReference>
<dbReference type="GO" id="GO:0003735">
    <property type="term" value="F:structural constituent of ribosome"/>
    <property type="evidence" value="ECO:0007669"/>
    <property type="project" value="InterPro"/>
</dbReference>
<dbReference type="GO" id="GO:0000049">
    <property type="term" value="F:tRNA binding"/>
    <property type="evidence" value="ECO:0007669"/>
    <property type="project" value="UniProtKB-UniRule"/>
</dbReference>
<dbReference type="GO" id="GO:0006412">
    <property type="term" value="P:translation"/>
    <property type="evidence" value="ECO:0007669"/>
    <property type="project" value="UniProtKB-UniRule"/>
</dbReference>
<dbReference type="FunFam" id="3.30.1440.10:FF:000001">
    <property type="entry name" value="50S ribosomal protein L5"/>
    <property type="match status" value="1"/>
</dbReference>
<dbReference type="Gene3D" id="3.30.1440.10">
    <property type="match status" value="1"/>
</dbReference>
<dbReference type="HAMAP" id="MF_01333_B">
    <property type="entry name" value="Ribosomal_uL5_B"/>
    <property type="match status" value="1"/>
</dbReference>
<dbReference type="InterPro" id="IPR002132">
    <property type="entry name" value="Ribosomal_uL5"/>
</dbReference>
<dbReference type="InterPro" id="IPR020930">
    <property type="entry name" value="Ribosomal_uL5_bac-type"/>
</dbReference>
<dbReference type="InterPro" id="IPR031309">
    <property type="entry name" value="Ribosomal_uL5_C"/>
</dbReference>
<dbReference type="InterPro" id="IPR020929">
    <property type="entry name" value="Ribosomal_uL5_CS"/>
</dbReference>
<dbReference type="InterPro" id="IPR022803">
    <property type="entry name" value="Ribosomal_uL5_dom_sf"/>
</dbReference>
<dbReference type="InterPro" id="IPR031310">
    <property type="entry name" value="Ribosomal_uL5_N"/>
</dbReference>
<dbReference type="NCBIfam" id="NF000585">
    <property type="entry name" value="PRK00010.1"/>
    <property type="match status" value="1"/>
</dbReference>
<dbReference type="PANTHER" id="PTHR11994">
    <property type="entry name" value="60S RIBOSOMAL PROTEIN L11-RELATED"/>
    <property type="match status" value="1"/>
</dbReference>
<dbReference type="Pfam" id="PF00281">
    <property type="entry name" value="Ribosomal_L5"/>
    <property type="match status" value="1"/>
</dbReference>
<dbReference type="Pfam" id="PF00673">
    <property type="entry name" value="Ribosomal_L5_C"/>
    <property type="match status" value="1"/>
</dbReference>
<dbReference type="PIRSF" id="PIRSF002161">
    <property type="entry name" value="Ribosomal_L5"/>
    <property type="match status" value="1"/>
</dbReference>
<dbReference type="SUPFAM" id="SSF55282">
    <property type="entry name" value="RL5-like"/>
    <property type="match status" value="1"/>
</dbReference>
<dbReference type="PROSITE" id="PS00358">
    <property type="entry name" value="RIBOSOMAL_L5"/>
    <property type="match status" value="1"/>
</dbReference>
<keyword id="KW-1185">Reference proteome</keyword>
<keyword id="KW-0687">Ribonucleoprotein</keyword>
<keyword id="KW-0689">Ribosomal protein</keyword>
<keyword id="KW-0694">RNA-binding</keyword>
<keyword id="KW-0699">rRNA-binding</keyword>
<keyword id="KW-0820">tRNA-binding</keyword>
<name>RL5_CITK8</name>
<proteinExistence type="inferred from homology"/>
<accession>A8AQK4</accession>
<feature type="chain" id="PRO_1000052718" description="Large ribosomal subunit protein uL5">
    <location>
        <begin position="1"/>
        <end position="179"/>
    </location>
</feature>